<sequence length="382" mass="40895">MKALHFGAGNIGRGFIGKLLADAGIQLTFADVNQVVLDALNARHSYQVHVVGENEQVDTVSGVNAVSSIGDDVVDLIAHVDLITTAVGPVVLERIAPAIAKGLAKRKAQGVDAPLNIIACENMVRGTTQLKGHVMNALADGDKAWVEQHVGFVDSAVDRIVPPSASATHDPLEVTVETFSEWIVDKTQFKGALPNIPGMELTDNLMAFVERKLFTLNTGHAITAYLGKLAGHQTIRDAILDESIRAVVKGAMEESGAVLIKRYGFDADKHAAYIQKILGRFENPYLKDDVERVGRQPLRKLSAGDRLIKPLLGTLEYGLPHVNLVKGIAAAMHFRSDEDPQAQELAALITEKGPQAALAQISGLDANSDVVAEAVNAYNATK</sequence>
<evidence type="ECO:0000255" key="1">
    <source>
        <dbReference type="HAMAP-Rule" id="MF_00196"/>
    </source>
</evidence>
<accession>B5R5B9</accession>
<protein>
    <recommendedName>
        <fullName evidence="1">Mannitol-1-phosphate 5-dehydrogenase</fullName>
        <ecNumber evidence="1">1.1.1.17</ecNumber>
    </recommendedName>
</protein>
<proteinExistence type="inferred from homology"/>
<gene>
    <name evidence="1" type="primary">mtlD</name>
    <name type="ordered locus">SEN3508</name>
</gene>
<keyword id="KW-0520">NAD</keyword>
<keyword id="KW-0560">Oxidoreductase</keyword>
<dbReference type="EC" id="1.1.1.17" evidence="1"/>
<dbReference type="EMBL" id="AM933172">
    <property type="protein sequence ID" value="CAR35087.1"/>
    <property type="molecule type" value="Genomic_DNA"/>
</dbReference>
<dbReference type="RefSeq" id="WP_000645377.1">
    <property type="nucleotide sequence ID" value="NC_011294.1"/>
</dbReference>
<dbReference type="SMR" id="B5R5B9"/>
<dbReference type="KEGG" id="set:SEN3508"/>
<dbReference type="HOGENOM" id="CLU_036089_2_0_6"/>
<dbReference type="Proteomes" id="UP000000613">
    <property type="component" value="Chromosome"/>
</dbReference>
<dbReference type="GO" id="GO:0005829">
    <property type="term" value="C:cytosol"/>
    <property type="evidence" value="ECO:0007669"/>
    <property type="project" value="TreeGrafter"/>
</dbReference>
<dbReference type="GO" id="GO:0008926">
    <property type="term" value="F:mannitol-1-phosphate 5-dehydrogenase activity"/>
    <property type="evidence" value="ECO:0007669"/>
    <property type="project" value="UniProtKB-UniRule"/>
</dbReference>
<dbReference type="GO" id="GO:0019592">
    <property type="term" value="P:mannitol catabolic process"/>
    <property type="evidence" value="ECO:0007669"/>
    <property type="project" value="TreeGrafter"/>
</dbReference>
<dbReference type="FunFam" id="1.10.1040.10:FF:000009">
    <property type="entry name" value="Mannitol-1-phosphate 5-dehydrogenase"/>
    <property type="match status" value="1"/>
</dbReference>
<dbReference type="FunFam" id="3.40.50.720:FF:000075">
    <property type="entry name" value="Mannitol-1-phosphate 5-dehydrogenase"/>
    <property type="match status" value="1"/>
</dbReference>
<dbReference type="Gene3D" id="1.10.1040.10">
    <property type="entry name" value="N-(1-d-carboxylethyl)-l-norvaline Dehydrogenase, domain 2"/>
    <property type="match status" value="1"/>
</dbReference>
<dbReference type="Gene3D" id="3.40.50.720">
    <property type="entry name" value="NAD(P)-binding Rossmann-like Domain"/>
    <property type="match status" value="1"/>
</dbReference>
<dbReference type="HAMAP" id="MF_00196">
    <property type="entry name" value="Mannitol_dehydrog"/>
    <property type="match status" value="1"/>
</dbReference>
<dbReference type="InterPro" id="IPR008927">
    <property type="entry name" value="6-PGluconate_DH-like_C_sf"/>
</dbReference>
<dbReference type="InterPro" id="IPR013328">
    <property type="entry name" value="6PGD_dom2"/>
</dbReference>
<dbReference type="InterPro" id="IPR023028">
    <property type="entry name" value="Mannitol_1_phos_5_DH"/>
</dbReference>
<dbReference type="InterPro" id="IPR000669">
    <property type="entry name" value="Mannitol_DH"/>
</dbReference>
<dbReference type="InterPro" id="IPR013118">
    <property type="entry name" value="Mannitol_DH_C"/>
</dbReference>
<dbReference type="InterPro" id="IPR023027">
    <property type="entry name" value="Mannitol_DH_CS"/>
</dbReference>
<dbReference type="InterPro" id="IPR013131">
    <property type="entry name" value="Mannitol_DH_N"/>
</dbReference>
<dbReference type="InterPro" id="IPR036291">
    <property type="entry name" value="NAD(P)-bd_dom_sf"/>
</dbReference>
<dbReference type="NCBIfam" id="NF002646">
    <property type="entry name" value="PRK02318.1-2"/>
    <property type="match status" value="1"/>
</dbReference>
<dbReference type="NCBIfam" id="NF002647">
    <property type="entry name" value="PRK02318.1-3"/>
    <property type="match status" value="1"/>
</dbReference>
<dbReference type="NCBIfam" id="NF002648">
    <property type="entry name" value="PRK02318.1-4"/>
    <property type="match status" value="1"/>
</dbReference>
<dbReference type="NCBIfam" id="NF002650">
    <property type="entry name" value="PRK02318.2-2"/>
    <property type="match status" value="1"/>
</dbReference>
<dbReference type="NCBIfam" id="NF002652">
    <property type="entry name" value="PRK02318.2-5"/>
    <property type="match status" value="1"/>
</dbReference>
<dbReference type="PANTHER" id="PTHR30524:SF0">
    <property type="entry name" value="ALTRONATE OXIDOREDUCTASE-RELATED"/>
    <property type="match status" value="1"/>
</dbReference>
<dbReference type="PANTHER" id="PTHR30524">
    <property type="entry name" value="MANNITOL-1-PHOSPHATE 5-DEHYDROGENASE"/>
    <property type="match status" value="1"/>
</dbReference>
<dbReference type="Pfam" id="PF01232">
    <property type="entry name" value="Mannitol_dh"/>
    <property type="match status" value="1"/>
</dbReference>
<dbReference type="Pfam" id="PF08125">
    <property type="entry name" value="Mannitol_dh_C"/>
    <property type="match status" value="1"/>
</dbReference>
<dbReference type="PRINTS" id="PR00084">
    <property type="entry name" value="MTLDHDRGNASE"/>
</dbReference>
<dbReference type="SUPFAM" id="SSF48179">
    <property type="entry name" value="6-phosphogluconate dehydrogenase C-terminal domain-like"/>
    <property type="match status" value="1"/>
</dbReference>
<dbReference type="SUPFAM" id="SSF51735">
    <property type="entry name" value="NAD(P)-binding Rossmann-fold domains"/>
    <property type="match status" value="1"/>
</dbReference>
<dbReference type="PROSITE" id="PS00974">
    <property type="entry name" value="MANNITOL_DHGENASE"/>
    <property type="match status" value="1"/>
</dbReference>
<reference key="1">
    <citation type="journal article" date="2008" name="Genome Res.">
        <title>Comparative genome analysis of Salmonella enteritidis PT4 and Salmonella gallinarum 287/91 provides insights into evolutionary and host adaptation pathways.</title>
        <authorList>
            <person name="Thomson N.R."/>
            <person name="Clayton D.J."/>
            <person name="Windhorst D."/>
            <person name="Vernikos G."/>
            <person name="Davidson S."/>
            <person name="Churcher C."/>
            <person name="Quail M.A."/>
            <person name="Stevens M."/>
            <person name="Jones M.A."/>
            <person name="Watson M."/>
            <person name="Barron A."/>
            <person name="Layton A."/>
            <person name="Pickard D."/>
            <person name="Kingsley R.A."/>
            <person name="Bignell A."/>
            <person name="Clark L."/>
            <person name="Harris B."/>
            <person name="Ormond D."/>
            <person name="Abdellah Z."/>
            <person name="Brooks K."/>
            <person name="Cherevach I."/>
            <person name="Chillingworth T."/>
            <person name="Woodward J."/>
            <person name="Norberczak H."/>
            <person name="Lord A."/>
            <person name="Arrowsmith C."/>
            <person name="Jagels K."/>
            <person name="Moule S."/>
            <person name="Mungall K."/>
            <person name="Saunders M."/>
            <person name="Whitehead S."/>
            <person name="Chabalgoity J.A."/>
            <person name="Maskell D."/>
            <person name="Humphreys T."/>
            <person name="Roberts M."/>
            <person name="Barrow P.A."/>
            <person name="Dougan G."/>
            <person name="Parkhill J."/>
        </authorList>
    </citation>
    <scope>NUCLEOTIDE SEQUENCE [LARGE SCALE GENOMIC DNA]</scope>
    <source>
        <strain>P125109</strain>
    </source>
</reference>
<name>MTLD_SALEP</name>
<organism>
    <name type="scientific">Salmonella enteritidis PT4 (strain P125109)</name>
    <dbReference type="NCBI Taxonomy" id="550537"/>
    <lineage>
        <taxon>Bacteria</taxon>
        <taxon>Pseudomonadati</taxon>
        <taxon>Pseudomonadota</taxon>
        <taxon>Gammaproteobacteria</taxon>
        <taxon>Enterobacterales</taxon>
        <taxon>Enterobacteriaceae</taxon>
        <taxon>Salmonella</taxon>
    </lineage>
</organism>
<comment type="catalytic activity">
    <reaction evidence="1">
        <text>D-mannitol 1-phosphate + NAD(+) = beta-D-fructose 6-phosphate + NADH + H(+)</text>
        <dbReference type="Rhea" id="RHEA:19661"/>
        <dbReference type="ChEBI" id="CHEBI:15378"/>
        <dbReference type="ChEBI" id="CHEBI:57540"/>
        <dbReference type="ChEBI" id="CHEBI:57634"/>
        <dbReference type="ChEBI" id="CHEBI:57945"/>
        <dbReference type="ChEBI" id="CHEBI:61381"/>
        <dbReference type="EC" id="1.1.1.17"/>
    </reaction>
</comment>
<comment type="similarity">
    <text evidence="1">Belongs to the mannitol dehydrogenase family.</text>
</comment>
<feature type="chain" id="PRO_1000099197" description="Mannitol-1-phosphate 5-dehydrogenase">
    <location>
        <begin position="1"/>
        <end position="382"/>
    </location>
</feature>
<feature type="binding site" evidence="1">
    <location>
        <begin position="3"/>
        <end position="14"/>
    </location>
    <ligand>
        <name>NAD(+)</name>
        <dbReference type="ChEBI" id="CHEBI:57540"/>
    </ligand>
</feature>